<organism>
    <name type="scientific">Limosilactobacillus reuteri (strain DSM 20016)</name>
    <name type="common">Lactobacillus reuteri</name>
    <dbReference type="NCBI Taxonomy" id="557436"/>
    <lineage>
        <taxon>Bacteria</taxon>
        <taxon>Bacillati</taxon>
        <taxon>Bacillota</taxon>
        <taxon>Bacilli</taxon>
        <taxon>Lactobacillales</taxon>
        <taxon>Lactobacillaceae</taxon>
        <taxon>Limosilactobacillus</taxon>
    </lineage>
</organism>
<sequence length="603" mass="69365">MASEHLEHKLALLPDKPGCYLMKNINDQIIYVGKAKNLKNRVRSYFKSSHTGKVAKMVSEVADFETIVTSTNKESFLLEITLIQKHQPYFNIKLKKGTGYPYIKITNERDPQIKIVSKIKKDGGYYFGPYPNVYAAEETMHFIQKVYPLRRCNGYQGRPCLYYHMGQCLGACFKEVPKSDYEEQIKKIKSFLSGNTATVKRQLTKKMQRAAENMEFERAAEIRDQLHYIEVTVEKQKIISNDKTPRDLFNFYMDKGWLSIQIFFIRQARLMKREKRLFPIVDTAVEEMTSFILQFYNRRNNILPHEILLPKGLPNKEISEILGVPVRTPVRGEKRDLLAMAHENAQLSLDEKFRLLEMDQSKTTGAMKEITDALGLPEGHRIEAFDHSHIQGADPVSAMVVFINGEPAKNFYRKYKLKTVINHADEAASTREVIRRRYSRLLKENKPMPDMIFMDGGEIQMDAAKDVLENELGLEIPVVGMVKNDKHQTADLLFGDDDHHINLNPRSQGFYLVQRIQDEVHRFAITFHRRVHTKHSLSSRLDEIKGVGPRTRTKLLKKYGSITKIAQASVDEIHSLGINRPTAQLIKVSLQKNAEVAKGSSHD</sequence>
<keyword id="KW-0963">Cytoplasm</keyword>
<keyword id="KW-0227">DNA damage</keyword>
<keyword id="KW-0228">DNA excision</keyword>
<keyword id="KW-0234">DNA repair</keyword>
<keyword id="KW-0267">Excision nuclease</keyword>
<keyword id="KW-1185">Reference proteome</keyword>
<keyword id="KW-0742">SOS response</keyword>
<evidence type="ECO:0000255" key="1">
    <source>
        <dbReference type="HAMAP-Rule" id="MF_00203"/>
    </source>
</evidence>
<protein>
    <recommendedName>
        <fullName evidence="1">UvrABC system protein C</fullName>
        <shortName evidence="1">Protein UvrC</shortName>
    </recommendedName>
    <alternativeName>
        <fullName evidence="1">Excinuclease ABC subunit C</fullName>
    </alternativeName>
</protein>
<gene>
    <name evidence="1" type="primary">uvrC</name>
    <name type="ordered locus">Lreu_0657</name>
</gene>
<dbReference type="EMBL" id="CP000705">
    <property type="protein sequence ID" value="ABQ82922.1"/>
    <property type="molecule type" value="Genomic_DNA"/>
</dbReference>
<dbReference type="RefSeq" id="WP_003668235.1">
    <property type="nucleotide sequence ID" value="NC_009513.1"/>
</dbReference>
<dbReference type="SMR" id="A5VJ98"/>
<dbReference type="STRING" id="557436.Lreu_0657"/>
<dbReference type="KEGG" id="lre:Lreu_0657"/>
<dbReference type="PATRIC" id="fig|557436.17.peg.729"/>
<dbReference type="eggNOG" id="COG0322">
    <property type="taxonomic scope" value="Bacteria"/>
</dbReference>
<dbReference type="HOGENOM" id="CLU_014841_3_2_9"/>
<dbReference type="Proteomes" id="UP000001991">
    <property type="component" value="Chromosome"/>
</dbReference>
<dbReference type="GO" id="GO:0005737">
    <property type="term" value="C:cytoplasm"/>
    <property type="evidence" value="ECO:0007669"/>
    <property type="project" value="UniProtKB-SubCell"/>
</dbReference>
<dbReference type="GO" id="GO:0009380">
    <property type="term" value="C:excinuclease repair complex"/>
    <property type="evidence" value="ECO:0007669"/>
    <property type="project" value="InterPro"/>
</dbReference>
<dbReference type="GO" id="GO:0003677">
    <property type="term" value="F:DNA binding"/>
    <property type="evidence" value="ECO:0007669"/>
    <property type="project" value="UniProtKB-UniRule"/>
</dbReference>
<dbReference type="GO" id="GO:0009381">
    <property type="term" value="F:excinuclease ABC activity"/>
    <property type="evidence" value="ECO:0007669"/>
    <property type="project" value="UniProtKB-UniRule"/>
</dbReference>
<dbReference type="GO" id="GO:0006289">
    <property type="term" value="P:nucleotide-excision repair"/>
    <property type="evidence" value="ECO:0007669"/>
    <property type="project" value="UniProtKB-UniRule"/>
</dbReference>
<dbReference type="GO" id="GO:0009432">
    <property type="term" value="P:SOS response"/>
    <property type="evidence" value="ECO:0007669"/>
    <property type="project" value="UniProtKB-UniRule"/>
</dbReference>
<dbReference type="CDD" id="cd10434">
    <property type="entry name" value="GIY-YIG_UvrC_Cho"/>
    <property type="match status" value="1"/>
</dbReference>
<dbReference type="FunFam" id="3.30.420.340:FF:000002">
    <property type="entry name" value="UvrABC system protein C"/>
    <property type="match status" value="1"/>
</dbReference>
<dbReference type="FunFam" id="3.40.1440.10:FF:000001">
    <property type="entry name" value="UvrABC system protein C"/>
    <property type="match status" value="1"/>
</dbReference>
<dbReference type="FunFam" id="4.10.860.10:FF:000002">
    <property type="entry name" value="UvrABC system protein C"/>
    <property type="match status" value="1"/>
</dbReference>
<dbReference type="Gene3D" id="1.10.150.20">
    <property type="entry name" value="5' to 3' exonuclease, C-terminal subdomain"/>
    <property type="match status" value="1"/>
</dbReference>
<dbReference type="Gene3D" id="3.40.1440.10">
    <property type="entry name" value="GIY-YIG endonuclease"/>
    <property type="match status" value="1"/>
</dbReference>
<dbReference type="Gene3D" id="4.10.860.10">
    <property type="entry name" value="UVR domain"/>
    <property type="match status" value="1"/>
</dbReference>
<dbReference type="Gene3D" id="3.30.420.340">
    <property type="entry name" value="UvrC, RNAse H endonuclease domain"/>
    <property type="match status" value="1"/>
</dbReference>
<dbReference type="HAMAP" id="MF_00203">
    <property type="entry name" value="UvrC"/>
    <property type="match status" value="1"/>
</dbReference>
<dbReference type="InterPro" id="IPR000305">
    <property type="entry name" value="GIY-YIG_endonuc"/>
</dbReference>
<dbReference type="InterPro" id="IPR035901">
    <property type="entry name" value="GIY-YIG_endonuc_sf"/>
</dbReference>
<dbReference type="InterPro" id="IPR047296">
    <property type="entry name" value="GIY-YIG_UvrC_Cho"/>
</dbReference>
<dbReference type="InterPro" id="IPR010994">
    <property type="entry name" value="RuvA_2-like"/>
</dbReference>
<dbReference type="InterPro" id="IPR001943">
    <property type="entry name" value="UVR_dom"/>
</dbReference>
<dbReference type="InterPro" id="IPR036876">
    <property type="entry name" value="UVR_dom_sf"/>
</dbReference>
<dbReference type="InterPro" id="IPR050066">
    <property type="entry name" value="UvrABC_protein_C"/>
</dbReference>
<dbReference type="InterPro" id="IPR004791">
    <property type="entry name" value="UvrC"/>
</dbReference>
<dbReference type="InterPro" id="IPR001162">
    <property type="entry name" value="UvrC_RNase_H_dom"/>
</dbReference>
<dbReference type="InterPro" id="IPR038476">
    <property type="entry name" value="UvrC_RNase_H_dom_sf"/>
</dbReference>
<dbReference type="NCBIfam" id="TIGR00194">
    <property type="entry name" value="uvrC"/>
    <property type="match status" value="1"/>
</dbReference>
<dbReference type="PANTHER" id="PTHR30562:SF1">
    <property type="entry name" value="UVRABC SYSTEM PROTEIN C"/>
    <property type="match status" value="1"/>
</dbReference>
<dbReference type="PANTHER" id="PTHR30562">
    <property type="entry name" value="UVRC/OXIDOREDUCTASE"/>
    <property type="match status" value="1"/>
</dbReference>
<dbReference type="Pfam" id="PF01541">
    <property type="entry name" value="GIY-YIG"/>
    <property type="match status" value="1"/>
</dbReference>
<dbReference type="Pfam" id="PF14520">
    <property type="entry name" value="HHH_5"/>
    <property type="match status" value="1"/>
</dbReference>
<dbReference type="Pfam" id="PF02151">
    <property type="entry name" value="UVR"/>
    <property type="match status" value="1"/>
</dbReference>
<dbReference type="Pfam" id="PF22920">
    <property type="entry name" value="UvrC_RNaseH"/>
    <property type="match status" value="1"/>
</dbReference>
<dbReference type="Pfam" id="PF08459">
    <property type="entry name" value="UvrC_RNaseH_dom"/>
    <property type="match status" value="1"/>
</dbReference>
<dbReference type="SMART" id="SM00465">
    <property type="entry name" value="GIYc"/>
    <property type="match status" value="1"/>
</dbReference>
<dbReference type="SUPFAM" id="SSF46600">
    <property type="entry name" value="C-terminal UvrC-binding domain of UvrB"/>
    <property type="match status" value="1"/>
</dbReference>
<dbReference type="SUPFAM" id="SSF82771">
    <property type="entry name" value="GIY-YIG endonuclease"/>
    <property type="match status" value="1"/>
</dbReference>
<dbReference type="SUPFAM" id="SSF47781">
    <property type="entry name" value="RuvA domain 2-like"/>
    <property type="match status" value="1"/>
</dbReference>
<dbReference type="PROSITE" id="PS50164">
    <property type="entry name" value="GIY_YIG"/>
    <property type="match status" value="1"/>
</dbReference>
<dbReference type="PROSITE" id="PS50151">
    <property type="entry name" value="UVR"/>
    <property type="match status" value="1"/>
</dbReference>
<dbReference type="PROSITE" id="PS50165">
    <property type="entry name" value="UVRC"/>
    <property type="match status" value="1"/>
</dbReference>
<feature type="chain" id="PRO_1000077801" description="UvrABC system protein C">
    <location>
        <begin position="1"/>
        <end position="603"/>
    </location>
</feature>
<feature type="domain" description="GIY-YIG" evidence="1">
    <location>
        <begin position="15"/>
        <end position="92"/>
    </location>
</feature>
<feature type="domain" description="UVR" evidence="1">
    <location>
        <begin position="197"/>
        <end position="232"/>
    </location>
</feature>
<proteinExistence type="inferred from homology"/>
<comment type="function">
    <text evidence="1">The UvrABC repair system catalyzes the recognition and processing of DNA lesions. UvrC both incises the 5' and 3' sides of the lesion. The N-terminal half is responsible for the 3' incision and the C-terminal half is responsible for the 5' incision.</text>
</comment>
<comment type="subunit">
    <text evidence="1">Interacts with UvrB in an incision complex.</text>
</comment>
<comment type="subcellular location">
    <subcellularLocation>
        <location evidence="1">Cytoplasm</location>
    </subcellularLocation>
</comment>
<comment type="similarity">
    <text evidence="1">Belongs to the UvrC family.</text>
</comment>
<reference key="1">
    <citation type="journal article" date="2011" name="PLoS Genet.">
        <title>The evolution of host specialization in the vertebrate gut symbiont Lactobacillus reuteri.</title>
        <authorList>
            <person name="Frese S.A."/>
            <person name="Benson A.K."/>
            <person name="Tannock G.W."/>
            <person name="Loach D.M."/>
            <person name="Kim J."/>
            <person name="Zhang M."/>
            <person name="Oh P.L."/>
            <person name="Heng N.C."/>
            <person name="Patil P.B."/>
            <person name="Juge N."/>
            <person name="Mackenzie D.A."/>
            <person name="Pearson B.M."/>
            <person name="Lapidus A."/>
            <person name="Dalin E."/>
            <person name="Tice H."/>
            <person name="Goltsman E."/>
            <person name="Land M."/>
            <person name="Hauser L."/>
            <person name="Ivanova N."/>
            <person name="Kyrpides N.C."/>
            <person name="Walter J."/>
        </authorList>
    </citation>
    <scope>NUCLEOTIDE SEQUENCE [LARGE SCALE GENOMIC DNA]</scope>
    <source>
        <strain>DSM 20016</strain>
    </source>
</reference>
<accession>A5VJ98</accession>
<name>UVRC_LIMRD</name>